<name>FABA_SALNS</name>
<protein>
    <recommendedName>
        <fullName evidence="1">3-hydroxydecanoyl-[acyl-carrier-protein] dehydratase</fullName>
        <ecNumber evidence="1">4.2.1.59</ecNumber>
    </recommendedName>
    <alternativeName>
        <fullName evidence="1">3-hydroxyacyl-[acyl-carrier-protein] dehydratase FabA</fullName>
    </alternativeName>
    <alternativeName>
        <fullName evidence="1">Beta-hydroxydecanoyl thioester dehydrase</fullName>
    </alternativeName>
    <alternativeName>
        <fullName evidence="1">Trans-2-decenoyl-[acyl-carrier-protein] isomerase</fullName>
        <ecNumber evidence="1">5.3.3.14</ecNumber>
    </alternativeName>
</protein>
<sequence length="172" mass="19047">MVDKRESYTKEDLLASGRGELFGAKGPQLPAPNMLMMDRVVKMTETGGNFDKGYVEAELDINPDLWFFGCHFIGDPVMPGCLGLDAMWQLVGFYLGWLGGEGKGRALGVGEVKFTGQVLPTARKVTYRIHFKRIVNRRLIMGLADGEVLVDGRLIYTAHDLKVGLFQDTSAF</sequence>
<evidence type="ECO:0000255" key="1">
    <source>
        <dbReference type="HAMAP-Rule" id="MF_00405"/>
    </source>
</evidence>
<feature type="chain" id="PRO_1000201203" description="3-hydroxydecanoyl-[acyl-carrier-protein] dehydratase">
    <location>
        <begin position="1"/>
        <end position="172"/>
    </location>
</feature>
<feature type="active site" evidence="1">
    <location>
        <position position="71"/>
    </location>
</feature>
<comment type="function">
    <text evidence="1">Necessary for the introduction of cis unsaturation into fatty acids. Catalyzes the dehydration of (3R)-3-hydroxydecanoyl-ACP to E-(2)-decenoyl-ACP and then its isomerization to Z-(3)-decenoyl-ACP. Can catalyze the dehydratase reaction for beta-hydroxyacyl-ACPs with saturated chain lengths up to 16:0, being most active on intermediate chain length.</text>
</comment>
<comment type="catalytic activity">
    <reaction evidence="1">
        <text>a (3R)-hydroxyacyl-[ACP] = a (2E)-enoyl-[ACP] + H2O</text>
        <dbReference type="Rhea" id="RHEA:13097"/>
        <dbReference type="Rhea" id="RHEA-COMP:9925"/>
        <dbReference type="Rhea" id="RHEA-COMP:9945"/>
        <dbReference type="ChEBI" id="CHEBI:15377"/>
        <dbReference type="ChEBI" id="CHEBI:78784"/>
        <dbReference type="ChEBI" id="CHEBI:78827"/>
        <dbReference type="EC" id="4.2.1.59"/>
    </reaction>
</comment>
<comment type="catalytic activity">
    <reaction evidence="1">
        <text>(3R)-hydroxydecanoyl-[ACP] = (2E)-decenoyl-[ACP] + H2O</text>
        <dbReference type="Rhea" id="RHEA:41860"/>
        <dbReference type="Rhea" id="RHEA-COMP:9638"/>
        <dbReference type="Rhea" id="RHEA-COMP:9639"/>
        <dbReference type="ChEBI" id="CHEBI:15377"/>
        <dbReference type="ChEBI" id="CHEBI:78466"/>
        <dbReference type="ChEBI" id="CHEBI:78467"/>
    </reaction>
</comment>
<comment type="catalytic activity">
    <reaction evidence="1">
        <text>(2E)-decenoyl-[ACP] = (3Z)-decenoyl-[ACP]</text>
        <dbReference type="Rhea" id="RHEA:23568"/>
        <dbReference type="Rhea" id="RHEA-COMP:9639"/>
        <dbReference type="Rhea" id="RHEA-COMP:9927"/>
        <dbReference type="ChEBI" id="CHEBI:78467"/>
        <dbReference type="ChEBI" id="CHEBI:78798"/>
        <dbReference type="EC" id="5.3.3.14"/>
    </reaction>
</comment>
<comment type="pathway">
    <text evidence="1">Lipid metabolism; fatty acid biosynthesis.</text>
</comment>
<comment type="subunit">
    <text evidence="1">Homodimer.</text>
</comment>
<comment type="subcellular location">
    <subcellularLocation>
        <location evidence="1">Cytoplasm</location>
    </subcellularLocation>
</comment>
<comment type="similarity">
    <text evidence="1">Belongs to the thioester dehydratase family. FabA subfamily.</text>
</comment>
<accession>B4T1Z7</accession>
<proteinExistence type="inferred from homology"/>
<reference key="1">
    <citation type="journal article" date="2011" name="J. Bacteriol.">
        <title>Comparative genomics of 28 Salmonella enterica isolates: evidence for CRISPR-mediated adaptive sublineage evolution.</title>
        <authorList>
            <person name="Fricke W.F."/>
            <person name="Mammel M.K."/>
            <person name="McDermott P.F."/>
            <person name="Tartera C."/>
            <person name="White D.G."/>
            <person name="Leclerc J.E."/>
            <person name="Ravel J."/>
            <person name="Cebula T.A."/>
        </authorList>
    </citation>
    <scope>NUCLEOTIDE SEQUENCE [LARGE SCALE GENOMIC DNA]</scope>
    <source>
        <strain>SL254</strain>
    </source>
</reference>
<organism>
    <name type="scientific">Salmonella newport (strain SL254)</name>
    <dbReference type="NCBI Taxonomy" id="423368"/>
    <lineage>
        <taxon>Bacteria</taxon>
        <taxon>Pseudomonadati</taxon>
        <taxon>Pseudomonadota</taxon>
        <taxon>Gammaproteobacteria</taxon>
        <taxon>Enterobacterales</taxon>
        <taxon>Enterobacteriaceae</taxon>
        <taxon>Salmonella</taxon>
    </lineage>
</organism>
<gene>
    <name evidence="1" type="primary">fabA</name>
    <name type="ordered locus">SNSL254_A1108</name>
</gene>
<dbReference type="EC" id="4.2.1.59" evidence="1"/>
<dbReference type="EC" id="5.3.3.14" evidence="1"/>
<dbReference type="EMBL" id="CP001113">
    <property type="protein sequence ID" value="ACF62573.1"/>
    <property type="molecule type" value="Genomic_DNA"/>
</dbReference>
<dbReference type="RefSeq" id="WP_000227928.1">
    <property type="nucleotide sequence ID" value="NZ_CCMR01000003.1"/>
</dbReference>
<dbReference type="SMR" id="B4T1Z7"/>
<dbReference type="KEGG" id="see:SNSL254_A1108"/>
<dbReference type="HOGENOM" id="CLU_097925_0_0_6"/>
<dbReference type="UniPathway" id="UPA00094"/>
<dbReference type="Proteomes" id="UP000008824">
    <property type="component" value="Chromosome"/>
</dbReference>
<dbReference type="GO" id="GO:0005737">
    <property type="term" value="C:cytoplasm"/>
    <property type="evidence" value="ECO:0007669"/>
    <property type="project" value="UniProtKB-SubCell"/>
</dbReference>
<dbReference type="GO" id="GO:0019171">
    <property type="term" value="F:(3R)-hydroxyacyl-[acyl-carrier-protein] dehydratase activity"/>
    <property type="evidence" value="ECO:0007669"/>
    <property type="project" value="UniProtKB-UniRule"/>
</dbReference>
<dbReference type="GO" id="GO:0034017">
    <property type="term" value="F:trans-2-decenoyl-acyl-carrier-protein isomerase activity"/>
    <property type="evidence" value="ECO:0007669"/>
    <property type="project" value="UniProtKB-UniRule"/>
</dbReference>
<dbReference type="GO" id="GO:0006636">
    <property type="term" value="P:unsaturated fatty acid biosynthetic process"/>
    <property type="evidence" value="ECO:0007669"/>
    <property type="project" value="UniProtKB-UniRule"/>
</dbReference>
<dbReference type="CDD" id="cd01287">
    <property type="entry name" value="FabA"/>
    <property type="match status" value="1"/>
</dbReference>
<dbReference type="FunFam" id="3.10.129.10:FF:000003">
    <property type="entry name" value="3-hydroxydecanoyl-[acyl-carrier-protein] dehydratase"/>
    <property type="match status" value="1"/>
</dbReference>
<dbReference type="Gene3D" id="3.10.129.10">
    <property type="entry name" value="Hotdog Thioesterase"/>
    <property type="match status" value="1"/>
</dbReference>
<dbReference type="HAMAP" id="MF_00405">
    <property type="entry name" value="FabA"/>
    <property type="match status" value="1"/>
</dbReference>
<dbReference type="InterPro" id="IPR010083">
    <property type="entry name" value="FabA"/>
</dbReference>
<dbReference type="InterPro" id="IPR013114">
    <property type="entry name" value="FabA_FabZ"/>
</dbReference>
<dbReference type="InterPro" id="IPR029069">
    <property type="entry name" value="HotDog_dom_sf"/>
</dbReference>
<dbReference type="NCBIfam" id="TIGR01749">
    <property type="entry name" value="fabA"/>
    <property type="match status" value="1"/>
</dbReference>
<dbReference type="NCBIfam" id="NF003509">
    <property type="entry name" value="PRK05174.1"/>
    <property type="match status" value="1"/>
</dbReference>
<dbReference type="PANTHER" id="PTHR30272">
    <property type="entry name" value="3-HYDROXYACYL-[ACYL-CARRIER-PROTEIN] DEHYDRATASE"/>
    <property type="match status" value="1"/>
</dbReference>
<dbReference type="PANTHER" id="PTHR30272:SF8">
    <property type="entry name" value="3-HYDROXYDECANOYL-[ACYL-CARRIER-PROTEIN] DEHYDRATASE"/>
    <property type="match status" value="1"/>
</dbReference>
<dbReference type="Pfam" id="PF07977">
    <property type="entry name" value="FabA"/>
    <property type="match status" value="1"/>
</dbReference>
<dbReference type="SUPFAM" id="SSF54637">
    <property type="entry name" value="Thioesterase/thiol ester dehydrase-isomerase"/>
    <property type="match status" value="1"/>
</dbReference>
<keyword id="KW-0963">Cytoplasm</keyword>
<keyword id="KW-0275">Fatty acid biosynthesis</keyword>
<keyword id="KW-0276">Fatty acid metabolism</keyword>
<keyword id="KW-0413">Isomerase</keyword>
<keyword id="KW-0444">Lipid biosynthesis</keyword>
<keyword id="KW-0443">Lipid metabolism</keyword>
<keyword id="KW-0456">Lyase</keyword>